<reference key="1">
    <citation type="journal article" date="2009" name="Proc. Natl. Acad. Sci. U.S.A.">
        <title>Eukaryote-to-eukaryote gene transfer events revealed by the genome sequence of the wine yeast Saccharomyces cerevisiae EC1118.</title>
        <authorList>
            <person name="Novo M."/>
            <person name="Bigey F."/>
            <person name="Beyne E."/>
            <person name="Galeote V."/>
            <person name="Gavory F."/>
            <person name="Mallet S."/>
            <person name="Cambon B."/>
            <person name="Legras J.-L."/>
            <person name="Wincker P."/>
            <person name="Casaregola S."/>
            <person name="Dequin S."/>
        </authorList>
    </citation>
    <scope>NUCLEOTIDE SEQUENCE [LARGE SCALE GENOMIC DNA]</scope>
    <source>
        <strain>Lalvin EC1118 / Prise de mousse</strain>
    </source>
</reference>
<dbReference type="EMBL" id="FN393082">
    <property type="protein sequence ID" value="CAY81904.1"/>
    <property type="molecule type" value="Genomic_DNA"/>
</dbReference>
<dbReference type="SMR" id="C8ZET8"/>
<dbReference type="HOGENOM" id="CLU_012520_2_3_1"/>
<dbReference type="OrthoDB" id="13837at4893"/>
<dbReference type="Proteomes" id="UP000000286">
    <property type="component" value="Chromosome XIII, Scaffold EC1118_1M3"/>
</dbReference>
<dbReference type="GO" id="GO:0097367">
    <property type="term" value="F:carbohydrate derivative binding"/>
    <property type="evidence" value="ECO:0007669"/>
    <property type="project" value="InterPro"/>
</dbReference>
<dbReference type="GO" id="GO:0004360">
    <property type="term" value="F:glutamine-fructose-6-phosphate transaminase (isomerizing) activity"/>
    <property type="evidence" value="ECO:0007669"/>
    <property type="project" value="TreeGrafter"/>
</dbReference>
<dbReference type="GO" id="GO:0006002">
    <property type="term" value="P:fructose 6-phosphate metabolic process"/>
    <property type="evidence" value="ECO:0007669"/>
    <property type="project" value="TreeGrafter"/>
</dbReference>
<dbReference type="GO" id="GO:0006487">
    <property type="term" value="P:protein N-linked glycosylation"/>
    <property type="evidence" value="ECO:0007669"/>
    <property type="project" value="TreeGrafter"/>
</dbReference>
<dbReference type="GO" id="GO:0006047">
    <property type="term" value="P:UDP-N-acetylglucosamine metabolic process"/>
    <property type="evidence" value="ECO:0007669"/>
    <property type="project" value="TreeGrafter"/>
</dbReference>
<dbReference type="CDD" id="cd05008">
    <property type="entry name" value="SIS_GlmS_GlmD_1"/>
    <property type="match status" value="1"/>
</dbReference>
<dbReference type="CDD" id="cd05009">
    <property type="entry name" value="SIS_GlmS_GlmD_2"/>
    <property type="match status" value="1"/>
</dbReference>
<dbReference type="FunFam" id="3.40.50.10490:FF:000001">
    <property type="entry name" value="Glutamine--fructose-6-phosphate aminotransferase [isomerizing]"/>
    <property type="match status" value="1"/>
</dbReference>
<dbReference type="FunFam" id="3.40.50.10490:FF:000002">
    <property type="entry name" value="Glutamine--fructose-6-phosphate aminotransferase [isomerizing]"/>
    <property type="match status" value="1"/>
</dbReference>
<dbReference type="Gene3D" id="3.40.50.10490">
    <property type="entry name" value="Glucose-6-phosphate isomerase like protein, domain 1"/>
    <property type="match status" value="2"/>
</dbReference>
<dbReference type="InterPro" id="IPR035466">
    <property type="entry name" value="GlmS/AgaS_SIS"/>
</dbReference>
<dbReference type="InterPro" id="IPR035490">
    <property type="entry name" value="GlmS/FrlB_SIS"/>
</dbReference>
<dbReference type="InterPro" id="IPR001347">
    <property type="entry name" value="SIS_dom"/>
</dbReference>
<dbReference type="InterPro" id="IPR046348">
    <property type="entry name" value="SIS_dom_sf"/>
</dbReference>
<dbReference type="PANTHER" id="PTHR10937">
    <property type="entry name" value="GLUCOSAMINE--FRUCTOSE-6-PHOSPHATE AMINOTRANSFERASE, ISOMERIZING"/>
    <property type="match status" value="1"/>
</dbReference>
<dbReference type="PANTHER" id="PTHR10937:SF0">
    <property type="entry name" value="GLUTAMINE--FRUCTOSE-6-PHOSPHATE TRANSAMINASE (ISOMERIZING)"/>
    <property type="match status" value="1"/>
</dbReference>
<dbReference type="Pfam" id="PF01380">
    <property type="entry name" value="SIS"/>
    <property type="match status" value="2"/>
</dbReference>
<dbReference type="SUPFAM" id="SSF53697">
    <property type="entry name" value="SIS domain"/>
    <property type="match status" value="1"/>
</dbReference>
<dbReference type="PROSITE" id="PS51464">
    <property type="entry name" value="SIS"/>
    <property type="match status" value="2"/>
</dbReference>
<accession>C8ZET8</accession>
<organism>
    <name type="scientific">Saccharomyces cerevisiae (strain Lalvin EC1118 / Prise de mousse)</name>
    <name type="common">Baker's yeast</name>
    <dbReference type="NCBI Taxonomy" id="643680"/>
    <lineage>
        <taxon>Eukaryota</taxon>
        <taxon>Fungi</taxon>
        <taxon>Dikarya</taxon>
        <taxon>Ascomycota</taxon>
        <taxon>Saccharomycotina</taxon>
        <taxon>Saccharomycetes</taxon>
        <taxon>Saccharomycetales</taxon>
        <taxon>Saccharomycetaceae</taxon>
        <taxon>Saccharomyces</taxon>
    </lineage>
</organism>
<protein>
    <recommendedName>
        <fullName>Uncharacterized protein EC1118_1M3_2531g</fullName>
    </recommendedName>
</protein>
<gene>
    <name type="ORF">EC1118_1M3_2531g</name>
</gene>
<keyword id="KW-0677">Repeat</keyword>
<comment type="caution">
    <text evidence="2">Could be the product of a pseudogene. This is the C-terminal part of a putative glutamine--fructose-6-phosphate aminotransferase. Strain Lalvin EC1118 has a frameshift in position 258, which disrupts the gene coding for this protein and produces two ORFs. A contiguous sequence for this protein can be found in strain YJM789 (AC A6ZME2).</text>
</comment>
<proteinExistence type="uncertain"/>
<sequence>MEFYLSSDCASLARYVSKVVYLEDNDIAHIYDGELHIHCSKIGSEDFLFRTVQKLELELSKIKKGPYDNFMQKEIYEQCETTKNVMRGRVDAFTNRVVLGGLENWLTELRRAKRIIMIASKSSFHSCLAARPIFEELMEVPVNVELALDFVDRNCCIFRNDVCIFVSRSGETTDTINALNYCIKKEAVTIGVVNCSGSSISRFTHCGVHTNTGPEKGIATTKSYTSQYIALVMIALWMSEDLVSKIERRKEIIQALTIVPSQIKEVLELEPLIIELCDKKLKQHDTFLLLGRGYQFASALEGASKMKEISYVHSESILTDELGHRVLAVASDNPPIIAFATKDAFSPKIASCIDQIIERKGNPIIICNKGHKIWEQDKQKGNVVTLEVPQTVDCLQGILNVIPLQLISYWLAIKKDIGVDLPRDSAMSAPDI</sequence>
<name>YM085_YEAS8</name>
<evidence type="ECO:0000255" key="1">
    <source>
        <dbReference type="PROSITE-ProRule" id="PRU00797"/>
    </source>
</evidence>
<evidence type="ECO:0000305" key="2"/>
<feature type="chain" id="PRO_0000393384" description="Uncharacterized protein EC1118_1M3_2531g">
    <location>
        <begin position="1"/>
        <end position="432"/>
    </location>
</feature>
<feature type="domain" description="SIS 1" evidence="1">
    <location>
        <begin position="105"/>
        <end position="244"/>
    </location>
</feature>
<feature type="domain" description="SIS 2" evidence="1">
    <location>
        <begin position="277"/>
        <end position="422"/>
    </location>
</feature>